<keyword id="KW-0028">Amino-acid biosynthesis</keyword>
<keyword id="KW-0100">Branched-chain amino acid biosynthesis</keyword>
<keyword id="KW-0460">Magnesium</keyword>
<keyword id="KW-0479">Metal-binding</keyword>
<keyword id="KW-0521">NADP</keyword>
<keyword id="KW-0560">Oxidoreductase</keyword>
<keyword id="KW-1185">Reference proteome</keyword>
<evidence type="ECO:0000255" key="1">
    <source>
        <dbReference type="HAMAP-Rule" id="MF_00435"/>
    </source>
</evidence>
<evidence type="ECO:0000255" key="2">
    <source>
        <dbReference type="PROSITE-ProRule" id="PRU01197"/>
    </source>
</evidence>
<evidence type="ECO:0000255" key="3">
    <source>
        <dbReference type="PROSITE-ProRule" id="PRU01198"/>
    </source>
</evidence>
<sequence length="331" mass="36716">MAKVYYDEDANLELLRGKTVAIIGYGSQGHAHALNLKDSGVNVIVGLYEGSKSRKIAESQGLQVLNTKDAVKNADVIMMLIPDEKQAKVYMEDVCMNLKEGDALVFAHGFNIHFNQIVPPEYVDVYMIAPKGPGHMVRREYVRGGGVPCLVAVAQDYTGKAKEYALAYTKGIGGTKGGVLETTFKDETETDLFGEQAVLCGGLTALMKAGFETLVEAGYAPENAYFECVHEMKLIVDLIYEGGFNSMRHSISDTAEFGEYSVGNRIVTEETKKEMKKVLREIQDGTFANAWLVENQVNRPKFNAKRRIESEHPIEKVGVELRAMMPWLKEN</sequence>
<comment type="function">
    <text evidence="1">Involved in the biosynthesis of branched-chain amino acids (BCAA). Catalyzes an alkyl-migration followed by a ketol-acid reduction of (S)-2-acetolactate (S2AL) to yield (R)-2,3-dihydroxy-isovalerate. In the isomerase reaction, S2AL is rearranged via a Mg-dependent methyl migration to produce 3-hydroxy-3-methyl-2-ketobutyrate (HMKB). In the reductase reaction, this 2-ketoacid undergoes a metal-dependent reduction by NADPH to yield (R)-2,3-dihydroxy-isovalerate.</text>
</comment>
<comment type="catalytic activity">
    <reaction evidence="1">
        <text>(2R)-2,3-dihydroxy-3-methylbutanoate + NADP(+) = (2S)-2-acetolactate + NADPH + H(+)</text>
        <dbReference type="Rhea" id="RHEA:22068"/>
        <dbReference type="ChEBI" id="CHEBI:15378"/>
        <dbReference type="ChEBI" id="CHEBI:49072"/>
        <dbReference type="ChEBI" id="CHEBI:57783"/>
        <dbReference type="ChEBI" id="CHEBI:58349"/>
        <dbReference type="ChEBI" id="CHEBI:58476"/>
        <dbReference type="EC" id="1.1.1.86"/>
    </reaction>
</comment>
<comment type="catalytic activity">
    <reaction evidence="1">
        <text>(2R,3R)-2,3-dihydroxy-3-methylpentanoate + NADP(+) = (S)-2-ethyl-2-hydroxy-3-oxobutanoate + NADPH + H(+)</text>
        <dbReference type="Rhea" id="RHEA:13493"/>
        <dbReference type="ChEBI" id="CHEBI:15378"/>
        <dbReference type="ChEBI" id="CHEBI:49256"/>
        <dbReference type="ChEBI" id="CHEBI:49258"/>
        <dbReference type="ChEBI" id="CHEBI:57783"/>
        <dbReference type="ChEBI" id="CHEBI:58349"/>
        <dbReference type="EC" id="1.1.1.86"/>
    </reaction>
</comment>
<comment type="cofactor">
    <cofactor evidence="1">
        <name>Mg(2+)</name>
        <dbReference type="ChEBI" id="CHEBI:18420"/>
    </cofactor>
    <text evidence="1">Binds 2 magnesium ions per subunit.</text>
</comment>
<comment type="pathway">
    <text evidence="1">Amino-acid biosynthesis; L-isoleucine biosynthesis; L-isoleucine from 2-oxobutanoate: step 2/4.</text>
</comment>
<comment type="pathway">
    <text evidence="1">Amino-acid biosynthesis; L-valine biosynthesis; L-valine from pyruvate: step 2/4.</text>
</comment>
<comment type="similarity">
    <text evidence="1">Belongs to the ketol-acid reductoisomerase family.</text>
</comment>
<proteinExistence type="inferred from homology"/>
<organism>
    <name type="scientific">Clostridium novyi (strain NT)</name>
    <dbReference type="NCBI Taxonomy" id="386415"/>
    <lineage>
        <taxon>Bacteria</taxon>
        <taxon>Bacillati</taxon>
        <taxon>Bacillota</taxon>
        <taxon>Clostridia</taxon>
        <taxon>Eubacteriales</taxon>
        <taxon>Clostridiaceae</taxon>
        <taxon>Clostridium</taxon>
    </lineage>
</organism>
<protein>
    <recommendedName>
        <fullName evidence="1">Ketol-acid reductoisomerase (NADP(+))</fullName>
        <shortName evidence="1">KARI</shortName>
        <ecNumber evidence="1">1.1.1.86</ecNumber>
    </recommendedName>
    <alternativeName>
        <fullName evidence="1">Acetohydroxy-acid isomeroreductase</fullName>
        <shortName evidence="1">AHIR</shortName>
    </alternativeName>
    <alternativeName>
        <fullName evidence="1">Alpha-keto-beta-hydroxylacyl reductoisomerase</fullName>
    </alternativeName>
    <alternativeName>
        <fullName evidence="1">Ketol-acid reductoisomerase type 1</fullName>
    </alternativeName>
    <alternativeName>
        <fullName evidence="1">Ketol-acid reductoisomerase type I</fullName>
    </alternativeName>
</protein>
<name>ILVC_CLONN</name>
<dbReference type="EC" id="1.1.1.86" evidence="1"/>
<dbReference type="EMBL" id="CP000382">
    <property type="protein sequence ID" value="ABK61959.1"/>
    <property type="molecule type" value="Genomic_DNA"/>
</dbReference>
<dbReference type="RefSeq" id="WP_011722103.1">
    <property type="nucleotide sequence ID" value="NC_008593.1"/>
</dbReference>
<dbReference type="SMR" id="A0Q0E9"/>
<dbReference type="STRING" id="386415.NT01CX_2028"/>
<dbReference type="KEGG" id="cno:NT01CX_2028"/>
<dbReference type="PATRIC" id="fig|386415.7.peg.1132"/>
<dbReference type="eggNOG" id="COG0059">
    <property type="taxonomic scope" value="Bacteria"/>
</dbReference>
<dbReference type="HOGENOM" id="CLU_033821_0_1_9"/>
<dbReference type="UniPathway" id="UPA00047">
    <property type="reaction ID" value="UER00056"/>
</dbReference>
<dbReference type="UniPathway" id="UPA00049">
    <property type="reaction ID" value="UER00060"/>
</dbReference>
<dbReference type="Proteomes" id="UP000008220">
    <property type="component" value="Chromosome"/>
</dbReference>
<dbReference type="GO" id="GO:0005829">
    <property type="term" value="C:cytosol"/>
    <property type="evidence" value="ECO:0007669"/>
    <property type="project" value="TreeGrafter"/>
</dbReference>
<dbReference type="GO" id="GO:0004455">
    <property type="term" value="F:ketol-acid reductoisomerase activity"/>
    <property type="evidence" value="ECO:0007669"/>
    <property type="project" value="UniProtKB-UniRule"/>
</dbReference>
<dbReference type="GO" id="GO:0000287">
    <property type="term" value="F:magnesium ion binding"/>
    <property type="evidence" value="ECO:0007669"/>
    <property type="project" value="UniProtKB-UniRule"/>
</dbReference>
<dbReference type="GO" id="GO:0050661">
    <property type="term" value="F:NADP binding"/>
    <property type="evidence" value="ECO:0007669"/>
    <property type="project" value="InterPro"/>
</dbReference>
<dbReference type="GO" id="GO:0009097">
    <property type="term" value="P:isoleucine biosynthetic process"/>
    <property type="evidence" value="ECO:0007669"/>
    <property type="project" value="UniProtKB-UniRule"/>
</dbReference>
<dbReference type="GO" id="GO:0009099">
    <property type="term" value="P:L-valine biosynthetic process"/>
    <property type="evidence" value="ECO:0007669"/>
    <property type="project" value="UniProtKB-UniRule"/>
</dbReference>
<dbReference type="FunFam" id="3.40.50.720:FF:000023">
    <property type="entry name" value="Ketol-acid reductoisomerase (NADP(+))"/>
    <property type="match status" value="1"/>
</dbReference>
<dbReference type="Gene3D" id="6.10.240.10">
    <property type="match status" value="1"/>
</dbReference>
<dbReference type="Gene3D" id="3.40.50.720">
    <property type="entry name" value="NAD(P)-binding Rossmann-like Domain"/>
    <property type="match status" value="1"/>
</dbReference>
<dbReference type="HAMAP" id="MF_00435">
    <property type="entry name" value="IlvC"/>
    <property type="match status" value="1"/>
</dbReference>
<dbReference type="InterPro" id="IPR008927">
    <property type="entry name" value="6-PGluconate_DH-like_C_sf"/>
</dbReference>
<dbReference type="InterPro" id="IPR013023">
    <property type="entry name" value="KARI"/>
</dbReference>
<dbReference type="InterPro" id="IPR000506">
    <property type="entry name" value="KARI_C"/>
</dbReference>
<dbReference type="InterPro" id="IPR013116">
    <property type="entry name" value="KARI_N"/>
</dbReference>
<dbReference type="InterPro" id="IPR014359">
    <property type="entry name" value="KARI_prok"/>
</dbReference>
<dbReference type="InterPro" id="IPR036291">
    <property type="entry name" value="NAD(P)-bd_dom_sf"/>
</dbReference>
<dbReference type="NCBIfam" id="TIGR00465">
    <property type="entry name" value="ilvC"/>
    <property type="match status" value="1"/>
</dbReference>
<dbReference type="NCBIfam" id="NF004017">
    <property type="entry name" value="PRK05479.1"/>
    <property type="match status" value="1"/>
</dbReference>
<dbReference type="NCBIfam" id="NF009940">
    <property type="entry name" value="PRK13403.1"/>
    <property type="match status" value="1"/>
</dbReference>
<dbReference type="PANTHER" id="PTHR21371">
    <property type="entry name" value="KETOL-ACID REDUCTOISOMERASE, MITOCHONDRIAL"/>
    <property type="match status" value="1"/>
</dbReference>
<dbReference type="PANTHER" id="PTHR21371:SF1">
    <property type="entry name" value="KETOL-ACID REDUCTOISOMERASE, MITOCHONDRIAL"/>
    <property type="match status" value="1"/>
</dbReference>
<dbReference type="Pfam" id="PF01450">
    <property type="entry name" value="KARI_C"/>
    <property type="match status" value="1"/>
</dbReference>
<dbReference type="Pfam" id="PF07991">
    <property type="entry name" value="KARI_N"/>
    <property type="match status" value="1"/>
</dbReference>
<dbReference type="PIRSF" id="PIRSF000116">
    <property type="entry name" value="IlvC_gammaproteo"/>
    <property type="match status" value="1"/>
</dbReference>
<dbReference type="SUPFAM" id="SSF48179">
    <property type="entry name" value="6-phosphogluconate dehydrogenase C-terminal domain-like"/>
    <property type="match status" value="1"/>
</dbReference>
<dbReference type="SUPFAM" id="SSF51735">
    <property type="entry name" value="NAD(P)-binding Rossmann-fold domains"/>
    <property type="match status" value="1"/>
</dbReference>
<dbReference type="PROSITE" id="PS51851">
    <property type="entry name" value="KARI_C"/>
    <property type="match status" value="1"/>
</dbReference>
<dbReference type="PROSITE" id="PS51850">
    <property type="entry name" value="KARI_N"/>
    <property type="match status" value="1"/>
</dbReference>
<gene>
    <name evidence="1" type="primary">ilvC</name>
    <name type="ordered locus">NT01CX_2028</name>
</gene>
<feature type="chain" id="PRO_1000050502" description="Ketol-acid reductoisomerase (NADP(+))">
    <location>
        <begin position="1"/>
        <end position="331"/>
    </location>
</feature>
<feature type="domain" description="KARI N-terminal Rossmann" evidence="2">
    <location>
        <begin position="2"/>
        <end position="182"/>
    </location>
</feature>
<feature type="domain" description="KARI C-terminal knotted" evidence="3">
    <location>
        <begin position="183"/>
        <end position="328"/>
    </location>
</feature>
<feature type="active site" evidence="1">
    <location>
        <position position="108"/>
    </location>
</feature>
<feature type="binding site" evidence="1">
    <location>
        <begin position="25"/>
        <end position="28"/>
    </location>
    <ligand>
        <name>NADP(+)</name>
        <dbReference type="ChEBI" id="CHEBI:58349"/>
    </ligand>
</feature>
<feature type="binding site" evidence="1">
    <location>
        <position position="51"/>
    </location>
    <ligand>
        <name>NADP(+)</name>
        <dbReference type="ChEBI" id="CHEBI:58349"/>
    </ligand>
</feature>
<feature type="binding site" evidence="1">
    <location>
        <position position="53"/>
    </location>
    <ligand>
        <name>NADP(+)</name>
        <dbReference type="ChEBI" id="CHEBI:58349"/>
    </ligand>
</feature>
<feature type="binding site" evidence="1">
    <location>
        <begin position="83"/>
        <end position="86"/>
    </location>
    <ligand>
        <name>NADP(+)</name>
        <dbReference type="ChEBI" id="CHEBI:58349"/>
    </ligand>
</feature>
<feature type="binding site" evidence="1">
    <location>
        <position position="134"/>
    </location>
    <ligand>
        <name>NADP(+)</name>
        <dbReference type="ChEBI" id="CHEBI:58349"/>
    </ligand>
</feature>
<feature type="binding site" evidence="1">
    <location>
        <position position="191"/>
    </location>
    <ligand>
        <name>Mg(2+)</name>
        <dbReference type="ChEBI" id="CHEBI:18420"/>
        <label>1</label>
    </ligand>
</feature>
<feature type="binding site" evidence="1">
    <location>
        <position position="191"/>
    </location>
    <ligand>
        <name>Mg(2+)</name>
        <dbReference type="ChEBI" id="CHEBI:18420"/>
        <label>2</label>
    </ligand>
</feature>
<feature type="binding site" evidence="1">
    <location>
        <position position="195"/>
    </location>
    <ligand>
        <name>Mg(2+)</name>
        <dbReference type="ChEBI" id="CHEBI:18420"/>
        <label>1</label>
    </ligand>
</feature>
<feature type="binding site" evidence="1">
    <location>
        <position position="227"/>
    </location>
    <ligand>
        <name>Mg(2+)</name>
        <dbReference type="ChEBI" id="CHEBI:18420"/>
        <label>2</label>
    </ligand>
</feature>
<feature type="binding site" evidence="1">
    <location>
        <position position="231"/>
    </location>
    <ligand>
        <name>Mg(2+)</name>
        <dbReference type="ChEBI" id="CHEBI:18420"/>
        <label>2</label>
    </ligand>
</feature>
<feature type="binding site" evidence="1">
    <location>
        <position position="252"/>
    </location>
    <ligand>
        <name>substrate</name>
    </ligand>
</feature>
<reference key="1">
    <citation type="journal article" date="2006" name="Nat. Biotechnol.">
        <title>The genome and transcriptomes of the anti-tumor agent Clostridium novyi-NT.</title>
        <authorList>
            <person name="Bettegowda C."/>
            <person name="Huang X."/>
            <person name="Lin J."/>
            <person name="Cheong I."/>
            <person name="Kohli M."/>
            <person name="Szabo S.A."/>
            <person name="Zhang X."/>
            <person name="Diaz L.A. Jr."/>
            <person name="Velculescu V.E."/>
            <person name="Parmigiani G."/>
            <person name="Kinzler K.W."/>
            <person name="Vogelstein B."/>
            <person name="Zhou S."/>
        </authorList>
    </citation>
    <scope>NUCLEOTIDE SEQUENCE [LARGE SCALE GENOMIC DNA]</scope>
    <source>
        <strain>NT</strain>
    </source>
</reference>
<accession>A0Q0E9</accession>